<reference key="1">
    <citation type="journal article" date="2008" name="J. Bacteriol.">
        <title>The complete genome sequence of Actinobacillus pleuropneumoniae L20 (serotype 5b).</title>
        <authorList>
            <person name="Foote S.J."/>
            <person name="Bosse J.T."/>
            <person name="Bouevitch A.B."/>
            <person name="Langford P.R."/>
            <person name="Young N.M."/>
            <person name="Nash J.H.E."/>
        </authorList>
    </citation>
    <scope>NUCLEOTIDE SEQUENCE [LARGE SCALE GENOMIC DNA]</scope>
    <source>
        <strain>L20</strain>
    </source>
</reference>
<comment type="subunit">
    <text evidence="1">Homodimer.</text>
</comment>
<comment type="similarity">
    <text evidence="1">Belongs to the UPF0210 family.</text>
</comment>
<proteinExistence type="inferred from homology"/>
<protein>
    <recommendedName>
        <fullName evidence="1">UPF0210 protein APL_1491</fullName>
    </recommendedName>
</protein>
<accession>A3N2D9</accession>
<dbReference type="EMBL" id="CP000569">
    <property type="protein sequence ID" value="ABN74575.1"/>
    <property type="molecule type" value="Genomic_DNA"/>
</dbReference>
<dbReference type="RefSeq" id="WP_009875202.1">
    <property type="nucleotide sequence ID" value="NC_009053.1"/>
</dbReference>
<dbReference type="SMR" id="A3N2D9"/>
<dbReference type="STRING" id="416269.APL_1491"/>
<dbReference type="EnsemblBacteria" id="ABN74575">
    <property type="protein sequence ID" value="ABN74575"/>
    <property type="gene ID" value="APL_1491"/>
</dbReference>
<dbReference type="KEGG" id="apl:APL_1491"/>
<dbReference type="PATRIC" id="fig|416269.6.peg.1552"/>
<dbReference type="eggNOG" id="COG2848">
    <property type="taxonomic scope" value="Bacteria"/>
</dbReference>
<dbReference type="HOGENOM" id="CLU_048704_0_0_6"/>
<dbReference type="Proteomes" id="UP000001432">
    <property type="component" value="Chromosome"/>
</dbReference>
<dbReference type="CDD" id="cd08025">
    <property type="entry name" value="RNR_PFL_like_DUF711"/>
    <property type="match status" value="1"/>
</dbReference>
<dbReference type="Gene3D" id="3.20.70.20">
    <property type="match status" value="1"/>
</dbReference>
<dbReference type="HAMAP" id="MF_01221">
    <property type="entry name" value="UPF0210"/>
    <property type="match status" value="1"/>
</dbReference>
<dbReference type="InterPro" id="IPR007841">
    <property type="entry name" value="UPF0210"/>
</dbReference>
<dbReference type="NCBIfam" id="NF003700">
    <property type="entry name" value="PRK05313.1"/>
    <property type="match status" value="1"/>
</dbReference>
<dbReference type="PANTHER" id="PTHR37560:SF1">
    <property type="entry name" value="UPF0210 PROTEIN MJ1665"/>
    <property type="match status" value="1"/>
</dbReference>
<dbReference type="PANTHER" id="PTHR37560">
    <property type="entry name" value="UPF0210 PROTEIN SPR0218"/>
    <property type="match status" value="1"/>
</dbReference>
<dbReference type="Pfam" id="PF05167">
    <property type="entry name" value="DUF711"/>
    <property type="match status" value="1"/>
</dbReference>
<dbReference type="SUPFAM" id="SSF51998">
    <property type="entry name" value="PFL-like glycyl radical enzymes"/>
    <property type="match status" value="1"/>
</dbReference>
<evidence type="ECO:0000255" key="1">
    <source>
        <dbReference type="HAMAP-Rule" id="MF_01221"/>
    </source>
</evidence>
<gene>
    <name type="ordered locus">APL_1491</name>
</gene>
<sequence>MSIQSSEIIETIKMVADQNFDVRTITIGIDLHDCISADIDELNKNIYQKITTIGKDLVETAKILSAKYGIPIVNQRISVTPIAQIAAATKADSYVSIAQTLDRAAKAIGVSFIGGFSALVQKGMSPSDEVLIRSIPEAMQTTDIVCSSINIGSTRAGINMDAVKLAGETIKRTADITPEGFGCAKIVVFCNAVEDNPFMAGAFHGSGEADAIINVGVSGPGVVKEALENSNATTLTEVAEVVKKTAFKITRVGELIGQEASKMLNIPFGILDLSLAPTPAIGDSVARILETMGLSVCGTHGTTAALALLNDAVKKGGMMASSSVGGLSGAFIPVSEDEGMIAAAESGILTLDKLEAMTAVCSVGLDMIAVPGKTPAHTISGIIADEAAIGMINSKTTAVRIIPVTGKDIGESVEFGGLLGYAPIMPVKEGSCEVFVNRGGRIPAPVQSMKN</sequence>
<feature type="chain" id="PRO_1000066745" description="UPF0210 protein APL_1491">
    <location>
        <begin position="1"/>
        <end position="451"/>
    </location>
</feature>
<name>Y1491_ACTP2</name>
<keyword id="KW-1185">Reference proteome</keyword>
<organism>
    <name type="scientific">Actinobacillus pleuropneumoniae serotype 5b (strain L20)</name>
    <dbReference type="NCBI Taxonomy" id="416269"/>
    <lineage>
        <taxon>Bacteria</taxon>
        <taxon>Pseudomonadati</taxon>
        <taxon>Pseudomonadota</taxon>
        <taxon>Gammaproteobacteria</taxon>
        <taxon>Pasteurellales</taxon>
        <taxon>Pasteurellaceae</taxon>
        <taxon>Actinobacillus</taxon>
    </lineage>
</organism>